<protein>
    <recommendedName>
        <fullName evidence="1">Ribosomal RNA small subunit methyltransferase A</fullName>
        <ecNumber evidence="1">2.1.1.182</ecNumber>
    </recommendedName>
    <alternativeName>
        <fullName evidence="1">16S rRNA (adenine(1518)-N(6)/adenine(1519)-N(6))-dimethyltransferase</fullName>
    </alternativeName>
    <alternativeName>
        <fullName evidence="1">16S rRNA dimethyladenosine transferase</fullName>
    </alternativeName>
    <alternativeName>
        <fullName evidence="1">16S rRNA dimethylase</fullName>
    </alternativeName>
    <alternativeName>
        <fullName evidence="1">S-adenosylmethionine-6-N', N'-adenosyl(rRNA) dimethyltransferase</fullName>
    </alternativeName>
</protein>
<dbReference type="EC" id="2.1.1.182" evidence="1"/>
<dbReference type="EMBL" id="AP008229">
    <property type="protein sequence ID" value="BAE70293.1"/>
    <property type="molecule type" value="Genomic_DNA"/>
</dbReference>
<dbReference type="RefSeq" id="WP_011260168.1">
    <property type="nucleotide sequence ID" value="NC_007705.1"/>
</dbReference>
<dbReference type="SMR" id="Q2NZI4"/>
<dbReference type="KEGG" id="xom:XOO3538"/>
<dbReference type="HOGENOM" id="CLU_041220_0_1_6"/>
<dbReference type="GO" id="GO:0005829">
    <property type="term" value="C:cytosol"/>
    <property type="evidence" value="ECO:0007669"/>
    <property type="project" value="TreeGrafter"/>
</dbReference>
<dbReference type="GO" id="GO:0052908">
    <property type="term" value="F:16S rRNA (adenine(1518)-N(6)/adenine(1519)-N(6))-dimethyltransferase activity"/>
    <property type="evidence" value="ECO:0007669"/>
    <property type="project" value="UniProtKB-EC"/>
</dbReference>
<dbReference type="GO" id="GO:0003723">
    <property type="term" value="F:RNA binding"/>
    <property type="evidence" value="ECO:0007669"/>
    <property type="project" value="UniProtKB-KW"/>
</dbReference>
<dbReference type="FunFam" id="1.10.8.100:FF:000001">
    <property type="entry name" value="Ribosomal RNA small subunit methyltransferase A"/>
    <property type="match status" value="1"/>
</dbReference>
<dbReference type="FunFam" id="3.40.50.150:FF:000222">
    <property type="entry name" value="Ribosomal RNA small subunit methyltransferase A"/>
    <property type="match status" value="1"/>
</dbReference>
<dbReference type="Gene3D" id="1.10.8.100">
    <property type="entry name" value="Ribosomal RNA adenine dimethylase-like, domain 2"/>
    <property type="match status" value="1"/>
</dbReference>
<dbReference type="Gene3D" id="3.40.50.150">
    <property type="entry name" value="Vaccinia Virus protein VP39"/>
    <property type="match status" value="1"/>
</dbReference>
<dbReference type="HAMAP" id="MF_00607">
    <property type="entry name" value="16SrRNA_methyltr_A"/>
    <property type="match status" value="1"/>
</dbReference>
<dbReference type="InterPro" id="IPR001737">
    <property type="entry name" value="KsgA/Erm"/>
</dbReference>
<dbReference type="InterPro" id="IPR023165">
    <property type="entry name" value="rRNA_Ade_diMease-like_C"/>
</dbReference>
<dbReference type="InterPro" id="IPR020596">
    <property type="entry name" value="rRNA_Ade_Mease_Trfase_CS"/>
</dbReference>
<dbReference type="InterPro" id="IPR020598">
    <property type="entry name" value="rRNA_Ade_methylase_Trfase_N"/>
</dbReference>
<dbReference type="InterPro" id="IPR011530">
    <property type="entry name" value="rRNA_adenine_dimethylase"/>
</dbReference>
<dbReference type="InterPro" id="IPR029063">
    <property type="entry name" value="SAM-dependent_MTases_sf"/>
</dbReference>
<dbReference type="NCBIfam" id="TIGR00755">
    <property type="entry name" value="ksgA"/>
    <property type="match status" value="1"/>
</dbReference>
<dbReference type="PANTHER" id="PTHR11727">
    <property type="entry name" value="DIMETHYLADENOSINE TRANSFERASE"/>
    <property type="match status" value="1"/>
</dbReference>
<dbReference type="PANTHER" id="PTHR11727:SF7">
    <property type="entry name" value="DIMETHYLADENOSINE TRANSFERASE-RELATED"/>
    <property type="match status" value="1"/>
</dbReference>
<dbReference type="Pfam" id="PF00398">
    <property type="entry name" value="RrnaAD"/>
    <property type="match status" value="1"/>
</dbReference>
<dbReference type="SMART" id="SM00650">
    <property type="entry name" value="rADc"/>
    <property type="match status" value="1"/>
</dbReference>
<dbReference type="SUPFAM" id="SSF53335">
    <property type="entry name" value="S-adenosyl-L-methionine-dependent methyltransferases"/>
    <property type="match status" value="1"/>
</dbReference>
<dbReference type="PROSITE" id="PS01131">
    <property type="entry name" value="RRNA_A_DIMETH"/>
    <property type="match status" value="1"/>
</dbReference>
<dbReference type="PROSITE" id="PS51689">
    <property type="entry name" value="SAM_RNA_A_N6_MT"/>
    <property type="match status" value="1"/>
</dbReference>
<proteinExistence type="inferred from homology"/>
<keyword id="KW-0963">Cytoplasm</keyword>
<keyword id="KW-0489">Methyltransferase</keyword>
<keyword id="KW-0694">RNA-binding</keyword>
<keyword id="KW-0698">rRNA processing</keyword>
<keyword id="KW-0949">S-adenosyl-L-methionine</keyword>
<keyword id="KW-0808">Transferase</keyword>
<gene>
    <name evidence="1" type="primary">rsmA</name>
    <name evidence="1" type="synonym">ksgA</name>
    <name type="ordered locus">XOO3538</name>
</gene>
<reference key="1">
    <citation type="journal article" date="2005" name="Jpn. Agric. Res. Q.">
        <title>Genome sequence of Xanthomonas oryzae pv. oryzae suggests contribution of large numbers of effector genes and insertion sequences to its race diversity.</title>
        <authorList>
            <person name="Ochiai H."/>
            <person name="Inoue Y."/>
            <person name="Takeya M."/>
            <person name="Sasaki A."/>
            <person name="Kaku H."/>
        </authorList>
    </citation>
    <scope>NUCLEOTIDE SEQUENCE [LARGE SCALE GENOMIC DNA]</scope>
    <source>
        <strain>MAFF 311018</strain>
    </source>
</reference>
<feature type="chain" id="PRO_0000257375" description="Ribosomal RNA small subunit methyltransferase A">
    <location>
        <begin position="1"/>
        <end position="262"/>
    </location>
</feature>
<feature type="binding site" evidence="1">
    <location>
        <position position="16"/>
    </location>
    <ligand>
        <name>S-adenosyl-L-methionine</name>
        <dbReference type="ChEBI" id="CHEBI:59789"/>
    </ligand>
</feature>
<feature type="binding site" evidence="1">
    <location>
        <position position="18"/>
    </location>
    <ligand>
        <name>S-adenosyl-L-methionine</name>
        <dbReference type="ChEBI" id="CHEBI:59789"/>
    </ligand>
</feature>
<feature type="binding site" evidence="1">
    <location>
        <position position="43"/>
    </location>
    <ligand>
        <name>S-adenosyl-L-methionine</name>
        <dbReference type="ChEBI" id="CHEBI:59789"/>
    </ligand>
</feature>
<feature type="binding site" evidence="1">
    <location>
        <position position="64"/>
    </location>
    <ligand>
        <name>S-adenosyl-L-methionine</name>
        <dbReference type="ChEBI" id="CHEBI:59789"/>
    </ligand>
</feature>
<feature type="binding site" evidence="1">
    <location>
        <position position="89"/>
    </location>
    <ligand>
        <name>S-adenosyl-L-methionine</name>
        <dbReference type="ChEBI" id="CHEBI:59789"/>
    </ligand>
</feature>
<feature type="binding site" evidence="1">
    <location>
        <position position="109"/>
    </location>
    <ligand>
        <name>S-adenosyl-L-methionine</name>
        <dbReference type="ChEBI" id="CHEBI:59789"/>
    </ligand>
</feature>
<accession>Q2NZI4</accession>
<comment type="function">
    <text evidence="1">Specifically dimethylates two adjacent adenosines (A1518 and A1519) in the loop of a conserved hairpin near the 3'-end of 16S rRNA in the 30S particle. May play a critical role in biogenesis of 30S subunits.</text>
</comment>
<comment type="catalytic activity">
    <reaction evidence="1">
        <text>adenosine(1518)/adenosine(1519) in 16S rRNA + 4 S-adenosyl-L-methionine = N(6)-dimethyladenosine(1518)/N(6)-dimethyladenosine(1519) in 16S rRNA + 4 S-adenosyl-L-homocysteine + 4 H(+)</text>
        <dbReference type="Rhea" id="RHEA:19609"/>
        <dbReference type="Rhea" id="RHEA-COMP:10232"/>
        <dbReference type="Rhea" id="RHEA-COMP:10233"/>
        <dbReference type="ChEBI" id="CHEBI:15378"/>
        <dbReference type="ChEBI" id="CHEBI:57856"/>
        <dbReference type="ChEBI" id="CHEBI:59789"/>
        <dbReference type="ChEBI" id="CHEBI:74411"/>
        <dbReference type="ChEBI" id="CHEBI:74493"/>
        <dbReference type="EC" id="2.1.1.182"/>
    </reaction>
</comment>
<comment type="subcellular location">
    <subcellularLocation>
        <location evidence="1">Cytoplasm</location>
    </subcellularLocation>
</comment>
<comment type="similarity">
    <text evidence="1">Belongs to the class I-like SAM-binding methyltransferase superfamily. rRNA adenine N(6)-methyltransferase family. RsmA subfamily.</text>
</comment>
<name>RSMA_XANOM</name>
<organism>
    <name type="scientific">Xanthomonas oryzae pv. oryzae (strain MAFF 311018)</name>
    <dbReference type="NCBI Taxonomy" id="342109"/>
    <lineage>
        <taxon>Bacteria</taxon>
        <taxon>Pseudomonadati</taxon>
        <taxon>Pseudomonadota</taxon>
        <taxon>Gammaproteobacteria</taxon>
        <taxon>Lysobacterales</taxon>
        <taxon>Lysobacteraceae</taxon>
        <taxon>Xanthomonas</taxon>
    </lineage>
</organism>
<sequence length="262" mass="28537">MNSSFSAPAKKSLGQHFLADRYYIDRIVQAVDPRAGQHLVEIGPGQGAITFPLLRKHGALTVIEFDRDLIAPLTEAAAPIGALSIIHRDVLSVDFTALADGTPIRLVGNLPYNISSPILFHALDHAAVVADMHFMLQKEVVDRMAAGPGSKVYGRLSVMLQAYCDVTALFVVPPGAFRPPPKVDSAVVRLVPRDPATVHINDRRRFADVVRAGFGQRRKTLRNALSTVCEPAHFEAAQVRPDARAEQLEVADFIRLANVEPA</sequence>
<evidence type="ECO:0000255" key="1">
    <source>
        <dbReference type="HAMAP-Rule" id="MF_00607"/>
    </source>
</evidence>